<reference key="1">
    <citation type="journal article" date="2002" name="J. Biol. Chem.">
        <title>Staring, a novel E3 ubiquitin-protein ligase that targets syntaxin 1 for degradation.</title>
        <authorList>
            <person name="Chin L.-S."/>
            <person name="Vavalle J.P."/>
            <person name="Li L."/>
        </authorList>
    </citation>
    <scope>NUCLEOTIDE SEQUENCE [MRNA]</scope>
    <scope>POSSIBLE FUNCTION</scope>
    <scope>CATALYTIC ACTIVITY</scope>
    <scope>TISSUE SPECIFICITY</scope>
    <scope>POSSIBLE INTERACTION WITH STX1A</scope>
    <source>
        <strain>Sprague-Dawley</strain>
    </source>
</reference>
<reference key="2">
    <citation type="journal article" date="2012" name="Nat. Commun.">
        <title>Quantitative maps of protein phosphorylation sites across 14 different rat organs and tissues.</title>
        <authorList>
            <person name="Lundby A."/>
            <person name="Secher A."/>
            <person name="Lage K."/>
            <person name="Nordsborg N.B."/>
            <person name="Dmytriyev A."/>
            <person name="Lundby C."/>
            <person name="Olsen J.V."/>
        </authorList>
    </citation>
    <scope>PHOSPHORYLATION [LARGE SCALE ANALYSIS] AT SER-585 AND SER-586</scope>
    <scope>IDENTIFICATION BY MASS SPECTROMETRY [LARGE SCALE ANALYSIS]</scope>
</reference>
<comment type="function">
    <text evidence="1">Component of the RNF20/40 E3 ubiquitin-protein ligase complex that mediates monoubiquitination of 'Lys-120' of histone H2B (H2BK120ub1). H2BK120ub1 gives a specific tag for epigenetic transcriptional activation and is also prerequisite for histone H3 'Lys-4' and 'Lys-79' methylation (H3K4me and H3K79me, respectively). It thereby plays a central role in histone code and gene regulation. The RNF20/40 complex forms a H2B ubiquitin ligase complex in cooperation with the E2 enzyme UBE2A or UBE2B; reports about the cooperation with UBE2E1/UBCH are contradictory. Required for transcriptional activation of Hox genes.</text>
</comment>
<comment type="catalytic activity">
    <reaction evidence="7">
        <text>S-ubiquitinyl-[E2 ubiquitin-conjugating enzyme]-L-cysteine + [acceptor protein]-L-lysine = [E2 ubiquitin-conjugating enzyme]-L-cysteine + N(6)-ubiquitinyl-[acceptor protein]-L-lysine.</text>
        <dbReference type="EC" id="2.3.2.27"/>
    </reaction>
</comment>
<comment type="pathway">
    <text>Protein modification; protein ubiquitination.</text>
</comment>
<comment type="subunit">
    <text evidence="1">Component of the RNF20/40 complex (also known as BRE1 complex) probably composed of 2 copies of RNF20/BRE1A and 2 copies of RNF40/BRE1B. Interacts with UBE2E1/UBCH6. Interacts with RB1 and WAC (By similarity). May interact with STX1A.</text>
</comment>
<comment type="interaction">
    <interactant intactId="EBI-6110162">
        <id>Q8CJB9</id>
    </interactant>
    <interactant intactId="EBI-2255905">
        <id>P61265</id>
        <label>Stx1b</label>
    </interactant>
    <organismsDiffer>false</organismsDiffer>
    <experiments>4</experiments>
</comment>
<comment type="interaction">
    <interactant intactId="EBI-6110162">
        <id>Q8CJB9</id>
    </interactant>
    <interactant intactId="EBI-2129974">
        <id>O14933</id>
        <label>UBE2L6</label>
    </interactant>
    <organismsDiffer>true</organismsDiffer>
    <experiments>2</experiments>
</comment>
<comment type="subcellular location">
    <subcellularLocation>
        <location evidence="1">Nucleus</location>
    </subcellularLocation>
</comment>
<comment type="tissue specificity">
    <text evidence="7">Ubiquitously expressed. Expressed in brain, testis, heart, liver and kidney. Weakly expressed in lung, spleen and skeletal muscle (at protein level).</text>
</comment>
<comment type="similarity">
    <text evidence="8">Belongs to the BRE1 family.</text>
</comment>
<comment type="caution">
    <text evidence="9">Was originally thought to be cytoplasmic and membrane-associated and to mediate ubiquitination and subsequent degradation of STX1A.</text>
</comment>
<name>BRE1B_RAT</name>
<keyword id="KW-0007">Acetylation</keyword>
<keyword id="KW-0156">Chromatin regulator</keyword>
<keyword id="KW-0175">Coiled coil</keyword>
<keyword id="KW-1017">Isopeptide bond</keyword>
<keyword id="KW-0479">Metal-binding</keyword>
<keyword id="KW-0539">Nucleus</keyword>
<keyword id="KW-0597">Phosphoprotein</keyword>
<keyword id="KW-1185">Reference proteome</keyword>
<keyword id="KW-0808">Transferase</keyword>
<keyword id="KW-0832">Ubl conjugation</keyword>
<keyword id="KW-0833">Ubl conjugation pathway</keyword>
<keyword id="KW-0862">Zinc</keyword>
<keyword id="KW-0863">Zinc-finger</keyword>
<feature type="chain" id="PRO_0000055843" description="E3 ubiquitin-protein ligase BRE1B">
    <location>
        <begin position="1"/>
        <end position="1002"/>
    </location>
</feature>
<feature type="zinc finger region" description="RING-type" evidence="5">
    <location>
        <begin position="949"/>
        <end position="988"/>
    </location>
</feature>
<feature type="region of interest" description="Disordered" evidence="6">
    <location>
        <begin position="1"/>
        <end position="32"/>
    </location>
</feature>
<feature type="region of interest" description="Disordered" evidence="6">
    <location>
        <begin position="120"/>
        <end position="148"/>
    </location>
</feature>
<feature type="region of interest" description="Disordered" evidence="6">
    <location>
        <begin position="520"/>
        <end position="562"/>
    </location>
</feature>
<feature type="region of interest" description="Disordered" evidence="6">
    <location>
        <begin position="579"/>
        <end position="652"/>
    </location>
</feature>
<feature type="coiled-coil region" evidence="4">
    <location>
        <begin position="55"/>
        <end position="91"/>
    </location>
</feature>
<feature type="coiled-coil region" evidence="4">
    <location>
        <begin position="190"/>
        <end position="378"/>
    </location>
</feature>
<feature type="coiled-coil region" evidence="4">
    <location>
        <begin position="438"/>
        <end position="526"/>
    </location>
</feature>
<feature type="coiled-coil region" evidence="4">
    <location>
        <begin position="628"/>
        <end position="947"/>
    </location>
</feature>
<feature type="compositionally biased region" description="Basic and acidic residues" evidence="6">
    <location>
        <begin position="18"/>
        <end position="28"/>
    </location>
</feature>
<feature type="compositionally biased region" description="Basic and acidic residues" evidence="6">
    <location>
        <begin position="603"/>
        <end position="620"/>
    </location>
</feature>
<feature type="compositionally biased region" description="Basic and acidic residues" evidence="6">
    <location>
        <begin position="634"/>
        <end position="652"/>
    </location>
</feature>
<feature type="modified residue" description="N6-acetyllysine" evidence="2">
    <location>
        <position position="20"/>
    </location>
</feature>
<feature type="modified residue" description="Phosphoserine" evidence="3">
    <location>
        <position position="42"/>
    </location>
</feature>
<feature type="modified residue" description="N6-acetyllysine" evidence="3">
    <location>
        <position position="356"/>
    </location>
</feature>
<feature type="modified residue" description="N6-acetyllysine" evidence="2">
    <location>
        <position position="518"/>
    </location>
</feature>
<feature type="modified residue" description="Phosphoserine" evidence="10">
    <location>
        <position position="585"/>
    </location>
</feature>
<feature type="modified residue" description="Phosphoserine" evidence="10">
    <location>
        <position position="586"/>
    </location>
</feature>
<feature type="cross-link" description="Glycyl lysine isopeptide (Lys-Gly) (interchain with G-Cter in SUMO2)" evidence="1">
    <location>
        <position position="579"/>
    </location>
</feature>
<feature type="cross-link" description="Glycyl lysine isopeptide (Lys-Gly) (interchain with G-Cter in SUMO2)" evidence="1">
    <location>
        <position position="580"/>
    </location>
</feature>
<gene>
    <name type="primary">Rnf40</name>
    <name type="synonym">Bre1b</name>
</gene>
<accession>Q8CJB9</accession>
<sequence length="1002" mass="113841">MSGLSNKRAAGDGGSGPPEKKLNREEKTTTTLIEPIRLGGISSTEEMDSKVLQFKNKKLAERLEQRQACEDELRERIEKLEKRQATDDATLLIVNRYWAQLDETVEALLQCYENQRELSSSGTEVPGCQEGLTRDVIPRTDPGTSDLREPLPMQFRAPLSEPALAFVVALGASSCEEVELQLQGRMEFSKAAVSRVVEASDRLQRQVEELCQRVYSRGDSEAPGEVARARTRELGRENRRLQDLATQLQEKHHRISLEYSELQDKVTSTETKVLEMETTVEDLQWDIEKLRKREQKLNKHLAEALEQLNSGYYVSGSSTGFQGGQITLSMQKFEMLNAELEENQELANSRMAELEKLQAELQGAVRTNERLKVALRSLPEEVVRETGEYRMLQAQFSLLYNESLQVKTQLDEARGLLLASKNSHLRHIEHMESDELGLQKKLRTEVIQLEDTLAQVRKEYEMLRIEFEQNLAANEQAGPINREMRHLISSLQNHNHQLKGDAQRYKRKLREVQAEIGKLRAQASGSSHCGPNLSHPDDSGLNALAPGKEDSGPGPGGTPDSKKELALVAGATSVASSVKKEELVSSEDDAQALAPGTQGLPSRGREPEARPKRELREREGPSLGPPPAASTLSRADREKAKAEEARRKESELLKGLRAELKKAQESQKEMKLLLDMYKSAPKEQRDKVQLMAAERKAKAEVDELRSRIRDLEERDRRESKKIADEDALRRIRQAEEQIEHLQRKLGATKQEEEALLSEMDVTGQAFEDMQEQNGRLLQQLREKDDANFKLMSERIKANQIHKLLREEKDELGEQVLGLKSQVDAQLLTVQKLEEKERALQGSLGGVEKELTLRSQALELNKRKAVEAAQLAEDLKVQLEHVQTRLREIQPCLAESRAAREKESFNLKRAQEDISRLRRKLEKQRKVEVYADADEILQEEIKEYKARLTCPCCNTRKKDAVLTKCFHVFCFECVRGRYEARQRKCPKCNAAFGAHDFHRVYIS</sequence>
<proteinExistence type="evidence at protein level"/>
<protein>
    <recommendedName>
        <fullName>E3 ubiquitin-protein ligase BRE1B</fullName>
        <shortName>BRE1-B</shortName>
        <ecNumber evidence="7">2.3.2.27</ecNumber>
    </recommendedName>
    <alternativeName>
        <fullName>RING finger protein 40</fullName>
    </alternativeName>
    <alternativeName>
        <fullName evidence="8">RING-type E3 ubiquitin transferase BRE1B</fullName>
    </alternativeName>
    <alternativeName>
        <fullName>Syntaxin-1-interacting RING finger protein</fullName>
        <shortName>Protein staring</shortName>
    </alternativeName>
</protein>
<dbReference type="EC" id="2.3.2.27" evidence="7"/>
<dbReference type="EMBL" id="AF352815">
    <property type="protein sequence ID" value="AAN16401.1"/>
    <property type="molecule type" value="mRNA"/>
</dbReference>
<dbReference type="RefSeq" id="NP_703201.1">
    <property type="nucleotide sequence ID" value="NM_153471.1"/>
</dbReference>
<dbReference type="SMR" id="Q8CJB9"/>
<dbReference type="FunCoup" id="Q8CJB9">
    <property type="interactions" value="4555"/>
</dbReference>
<dbReference type="IntAct" id="Q8CJB9">
    <property type="interactions" value="2"/>
</dbReference>
<dbReference type="STRING" id="10116.ENSRNOP00000025500"/>
<dbReference type="GlyGen" id="Q8CJB9">
    <property type="glycosylation" value="1 site"/>
</dbReference>
<dbReference type="iPTMnet" id="Q8CJB9"/>
<dbReference type="PhosphoSitePlus" id="Q8CJB9"/>
<dbReference type="PaxDb" id="10116-ENSRNOP00000025500"/>
<dbReference type="GeneID" id="266712"/>
<dbReference type="KEGG" id="rno:266712"/>
<dbReference type="UCSC" id="RGD:628638">
    <property type="organism name" value="rat"/>
</dbReference>
<dbReference type="AGR" id="RGD:628638"/>
<dbReference type="CTD" id="9810"/>
<dbReference type="RGD" id="628638">
    <property type="gene designation" value="Rnf40"/>
</dbReference>
<dbReference type="VEuPathDB" id="HostDB:ENSRNOG00000018840"/>
<dbReference type="eggNOG" id="KOG0978">
    <property type="taxonomic scope" value="Eukaryota"/>
</dbReference>
<dbReference type="HOGENOM" id="CLU_002640_0_0_1"/>
<dbReference type="InParanoid" id="Q8CJB9"/>
<dbReference type="OrthoDB" id="10266039at2759"/>
<dbReference type="PhylomeDB" id="Q8CJB9"/>
<dbReference type="TreeFam" id="TF323183"/>
<dbReference type="BRENDA" id="2.3.2.27">
    <property type="organism ID" value="5301"/>
</dbReference>
<dbReference type="Reactome" id="R-RNO-8866654">
    <property type="pathway name" value="E3 ubiquitin ligases ubiquitinate target proteins"/>
</dbReference>
<dbReference type="UniPathway" id="UPA00143"/>
<dbReference type="PRO" id="PR:Q8CJB9"/>
<dbReference type="Proteomes" id="UP000002494">
    <property type="component" value="Chromosome 1"/>
</dbReference>
<dbReference type="Bgee" id="ENSRNOG00000018840">
    <property type="expression patterns" value="Expressed in thymus and 18 other cell types or tissues"/>
</dbReference>
<dbReference type="GO" id="GO:0033503">
    <property type="term" value="C:HULC complex"/>
    <property type="evidence" value="ECO:0000250"/>
    <property type="project" value="UniProtKB"/>
</dbReference>
<dbReference type="GO" id="GO:0005634">
    <property type="term" value="C:nucleus"/>
    <property type="evidence" value="ECO:0000266"/>
    <property type="project" value="RGD"/>
</dbReference>
<dbReference type="GO" id="GO:0032991">
    <property type="term" value="C:protein-containing complex"/>
    <property type="evidence" value="ECO:0000314"/>
    <property type="project" value="RGD"/>
</dbReference>
<dbReference type="GO" id="GO:0000151">
    <property type="term" value="C:ubiquitin ligase complex"/>
    <property type="evidence" value="ECO:0000266"/>
    <property type="project" value="RGD"/>
</dbReference>
<dbReference type="GO" id="GO:0003730">
    <property type="term" value="F:mRNA 3'-UTR binding"/>
    <property type="evidence" value="ECO:0000266"/>
    <property type="project" value="RGD"/>
</dbReference>
<dbReference type="GO" id="GO:0042803">
    <property type="term" value="F:protein homodimerization activity"/>
    <property type="evidence" value="ECO:0000266"/>
    <property type="project" value="RGD"/>
</dbReference>
<dbReference type="GO" id="GO:0017075">
    <property type="term" value="F:syntaxin-1 binding"/>
    <property type="evidence" value="ECO:0000353"/>
    <property type="project" value="RGD"/>
</dbReference>
<dbReference type="GO" id="GO:0031624">
    <property type="term" value="F:ubiquitin conjugating enzyme binding"/>
    <property type="evidence" value="ECO:0000314"/>
    <property type="project" value="RGD"/>
</dbReference>
<dbReference type="GO" id="GO:0061630">
    <property type="term" value="F:ubiquitin protein ligase activity"/>
    <property type="evidence" value="ECO:0000318"/>
    <property type="project" value="GO_Central"/>
</dbReference>
<dbReference type="GO" id="GO:0031625">
    <property type="term" value="F:ubiquitin protein ligase binding"/>
    <property type="evidence" value="ECO:0000266"/>
    <property type="project" value="RGD"/>
</dbReference>
<dbReference type="GO" id="GO:0004842">
    <property type="term" value="F:ubiquitin-protein transferase activity"/>
    <property type="evidence" value="ECO:0000314"/>
    <property type="project" value="RGD"/>
</dbReference>
<dbReference type="GO" id="GO:0008270">
    <property type="term" value="F:zinc ion binding"/>
    <property type="evidence" value="ECO:0007669"/>
    <property type="project" value="UniProtKB-KW"/>
</dbReference>
<dbReference type="GO" id="GO:0006325">
    <property type="term" value="P:chromatin organization"/>
    <property type="evidence" value="ECO:0007669"/>
    <property type="project" value="UniProtKB-KW"/>
</dbReference>
<dbReference type="GO" id="GO:1901800">
    <property type="term" value="P:positive regulation of proteasomal protein catabolic process"/>
    <property type="evidence" value="ECO:0000314"/>
    <property type="project" value="RGD"/>
</dbReference>
<dbReference type="GO" id="GO:1902916">
    <property type="term" value="P:positive regulation of protein polyubiquitination"/>
    <property type="evidence" value="ECO:0000314"/>
    <property type="project" value="RGD"/>
</dbReference>
<dbReference type="GO" id="GO:0045944">
    <property type="term" value="P:positive regulation of transcription by RNA polymerase II"/>
    <property type="evidence" value="ECO:0000266"/>
    <property type="project" value="RGD"/>
</dbReference>
<dbReference type="GO" id="GO:0016567">
    <property type="term" value="P:protein ubiquitination"/>
    <property type="evidence" value="ECO:0007669"/>
    <property type="project" value="UniProtKB-UniPathway"/>
</dbReference>
<dbReference type="GO" id="GO:0043434">
    <property type="term" value="P:response to peptide hormone"/>
    <property type="evidence" value="ECO:0000270"/>
    <property type="project" value="RGD"/>
</dbReference>
<dbReference type="GO" id="GO:0006511">
    <property type="term" value="P:ubiquitin-dependent protein catabolic process"/>
    <property type="evidence" value="ECO:0000314"/>
    <property type="project" value="RGD"/>
</dbReference>
<dbReference type="CDD" id="cd16815">
    <property type="entry name" value="RING-HC_RNF40"/>
    <property type="match status" value="1"/>
</dbReference>
<dbReference type="FunFam" id="3.30.40.10:FF:000040">
    <property type="entry name" value="E3 ubiquitin protein ligase"/>
    <property type="match status" value="1"/>
</dbReference>
<dbReference type="Gene3D" id="3.30.40.10">
    <property type="entry name" value="Zinc/RING finger domain, C3HC4 (zinc finger)"/>
    <property type="match status" value="1"/>
</dbReference>
<dbReference type="InterPro" id="IPR013956">
    <property type="entry name" value="E3_ubiquit_lig_Bre1"/>
</dbReference>
<dbReference type="InterPro" id="IPR018957">
    <property type="entry name" value="Znf_C3HC4_RING-type"/>
</dbReference>
<dbReference type="InterPro" id="IPR001841">
    <property type="entry name" value="Znf_RING"/>
</dbReference>
<dbReference type="InterPro" id="IPR013083">
    <property type="entry name" value="Znf_RING/FYVE/PHD"/>
</dbReference>
<dbReference type="InterPro" id="IPR017907">
    <property type="entry name" value="Znf_RING_CS"/>
</dbReference>
<dbReference type="PANTHER" id="PTHR23163:SF4">
    <property type="entry name" value="E3 UBIQUITIN-PROTEIN LIGASE BRE1B"/>
    <property type="match status" value="1"/>
</dbReference>
<dbReference type="PANTHER" id="PTHR23163">
    <property type="entry name" value="RING FINGER PROTEIN-RELATED"/>
    <property type="match status" value="1"/>
</dbReference>
<dbReference type="Pfam" id="PF00097">
    <property type="entry name" value="zf-C3HC4"/>
    <property type="match status" value="1"/>
</dbReference>
<dbReference type="SMART" id="SM00184">
    <property type="entry name" value="RING"/>
    <property type="match status" value="1"/>
</dbReference>
<dbReference type="SUPFAM" id="SSF57850">
    <property type="entry name" value="RING/U-box"/>
    <property type="match status" value="1"/>
</dbReference>
<dbReference type="PROSITE" id="PS00518">
    <property type="entry name" value="ZF_RING_1"/>
    <property type="match status" value="1"/>
</dbReference>
<dbReference type="PROSITE" id="PS50089">
    <property type="entry name" value="ZF_RING_2"/>
    <property type="match status" value="1"/>
</dbReference>
<organism>
    <name type="scientific">Rattus norvegicus</name>
    <name type="common">Rat</name>
    <dbReference type="NCBI Taxonomy" id="10116"/>
    <lineage>
        <taxon>Eukaryota</taxon>
        <taxon>Metazoa</taxon>
        <taxon>Chordata</taxon>
        <taxon>Craniata</taxon>
        <taxon>Vertebrata</taxon>
        <taxon>Euteleostomi</taxon>
        <taxon>Mammalia</taxon>
        <taxon>Eutheria</taxon>
        <taxon>Euarchontoglires</taxon>
        <taxon>Glires</taxon>
        <taxon>Rodentia</taxon>
        <taxon>Myomorpha</taxon>
        <taxon>Muroidea</taxon>
        <taxon>Muridae</taxon>
        <taxon>Murinae</taxon>
        <taxon>Rattus</taxon>
    </lineage>
</organism>
<evidence type="ECO:0000250" key="1">
    <source>
        <dbReference type="UniProtKB" id="O75150"/>
    </source>
</evidence>
<evidence type="ECO:0000250" key="2">
    <source>
        <dbReference type="UniProtKB" id="Q3U319"/>
    </source>
</evidence>
<evidence type="ECO:0000250" key="3">
    <source>
        <dbReference type="UniProtKB" id="Q5VTR2"/>
    </source>
</evidence>
<evidence type="ECO:0000255" key="4"/>
<evidence type="ECO:0000255" key="5">
    <source>
        <dbReference type="PROSITE-ProRule" id="PRU00175"/>
    </source>
</evidence>
<evidence type="ECO:0000256" key="6">
    <source>
        <dbReference type="SAM" id="MobiDB-lite"/>
    </source>
</evidence>
<evidence type="ECO:0000269" key="7">
    <source>
    </source>
</evidence>
<evidence type="ECO:0000305" key="8"/>
<evidence type="ECO:0000305" key="9">
    <source>
    </source>
</evidence>
<evidence type="ECO:0007744" key="10">
    <source>
    </source>
</evidence>